<feature type="chain" id="PRO_0000443893" description="Autophagy-related protein 8">
    <location>
        <begin position="1"/>
        <end position="118"/>
    </location>
</feature>
<feature type="propeptide" id="PRO_0000443894" description="Removed in mature form" evidence="1">
    <location>
        <begin position="117"/>
        <end position="118"/>
    </location>
</feature>
<feature type="site" description="Cleavage; by ATG4" evidence="1">
    <location>
        <begin position="116"/>
        <end position="117"/>
    </location>
</feature>
<feature type="lipid moiety-binding region" description="Phosphatidylethanolamine amidated glycine" evidence="1">
    <location>
        <position position="116"/>
    </location>
</feature>
<keyword id="KW-0072">Autophagy</keyword>
<keyword id="KW-0968">Cytoplasmic vesicle</keyword>
<keyword id="KW-0449">Lipoprotein</keyword>
<keyword id="KW-0472">Membrane</keyword>
<keyword id="KW-1185">Reference proteome</keyword>
<keyword id="KW-0926">Vacuole</keyword>
<organism>
    <name type="scientific">Beauveria bassiana (strain ARSEF 2860)</name>
    <name type="common">White muscardine disease fungus</name>
    <name type="synonym">Tritirachium shiotae</name>
    <dbReference type="NCBI Taxonomy" id="655819"/>
    <lineage>
        <taxon>Eukaryota</taxon>
        <taxon>Fungi</taxon>
        <taxon>Dikarya</taxon>
        <taxon>Ascomycota</taxon>
        <taxon>Pezizomycotina</taxon>
        <taxon>Sordariomycetes</taxon>
        <taxon>Hypocreomycetidae</taxon>
        <taxon>Hypocreales</taxon>
        <taxon>Cordycipitaceae</taxon>
        <taxon>Beauveria</taxon>
    </lineage>
</organism>
<evidence type="ECO:0000250" key="1">
    <source>
        <dbReference type="UniProtKB" id="P38182"/>
    </source>
</evidence>
<evidence type="ECO:0000269" key="2">
    <source>
    </source>
</evidence>
<evidence type="ECO:0000303" key="3">
    <source>
    </source>
</evidence>
<evidence type="ECO:0000305" key="4"/>
<reference key="1">
    <citation type="journal article" date="2012" name="Sci. Rep.">
        <title>Genomic perspectives on the evolution of fungal entomopathogenicity in Beauveria bassiana.</title>
        <authorList>
            <person name="Xiao G."/>
            <person name="Ying S.-H."/>
            <person name="Zheng P."/>
            <person name="Wang Z.-L."/>
            <person name="Zhang S."/>
            <person name="Xie X.-Q."/>
            <person name="Shang Y."/>
            <person name="St Leger R.J."/>
            <person name="Zhao G.-P."/>
            <person name="Wang C."/>
            <person name="Feng M.-G."/>
        </authorList>
    </citation>
    <scope>NUCLEOTIDE SEQUENCE [LARGE SCALE GENOMIC DNA]</scope>
    <source>
        <strain>ARSEF 2860</strain>
    </source>
</reference>
<reference key="2">
    <citation type="journal article" date="2016" name="Sci. Rep.">
        <title>The autophagy-related genes BbATG1 and BbATG8 have different functions in differentiation, stress resistance and virulence of mycopathogen Beauveria bassiana.</title>
        <authorList>
            <person name="Ying S.H."/>
            <person name="Liu J."/>
            <person name="Chu X.L."/>
            <person name="Xie X.Q."/>
            <person name="Feng M.G."/>
        </authorList>
    </citation>
    <scope>FUNCTION</scope>
    <scope>DISRUPTION PHENOTYPE</scope>
    <scope>SUBCELLULAR LOCATION</scope>
</reference>
<reference key="3">
    <citation type="journal article" date="2017" name="Environ. Microbiol.">
        <title>Discovery of a new intravacuolar protein required for the autophagy, development and virulence of Beauveria bassiana.</title>
        <authorList>
            <person name="Chu Z.J."/>
            <person name="Sun H.H."/>
            <person name="Zhu X.G."/>
            <person name="Ying S.H."/>
            <person name="Feng M.G."/>
        </authorList>
    </citation>
    <scope>INDUCTION</scope>
</reference>
<sequence>MRSKFKDEHPFEKRKAEAERIRQKYADRIPVICEKVEKSDIATIDKKKYLVPSDLTVGQFVYVIRKRIKLSPEKAIFIFVDEVLPPTAALMSSIYEEHKDEDGFLYITYSGENTFGSI</sequence>
<dbReference type="EMBL" id="JH725153">
    <property type="protein sequence ID" value="EJP69267.1"/>
    <property type="molecule type" value="Genomic_DNA"/>
</dbReference>
<dbReference type="RefSeq" id="XP_008595621.1">
    <property type="nucleotide sequence ID" value="XM_008597399.1"/>
</dbReference>
<dbReference type="SMR" id="J4UTT5"/>
<dbReference type="FunCoup" id="J4UTT5">
    <property type="interactions" value="538"/>
</dbReference>
<dbReference type="STRING" id="655819.J4UTT5"/>
<dbReference type="EnsemblFungi" id="BB8028_0001g11640.1">
    <property type="protein sequence ID" value="BB8028_0001g11640.1"/>
    <property type="gene ID" value="BB8028_0001g11640"/>
</dbReference>
<dbReference type="GeneID" id="19885314"/>
<dbReference type="HOGENOM" id="CLU_119276_0_1_1"/>
<dbReference type="InParanoid" id="J4UTT5"/>
<dbReference type="OrthoDB" id="1065at474943"/>
<dbReference type="Proteomes" id="UP000002762">
    <property type="component" value="Unassembled WGS sequence"/>
</dbReference>
<dbReference type="GO" id="GO:0000421">
    <property type="term" value="C:autophagosome membrane"/>
    <property type="evidence" value="ECO:0007669"/>
    <property type="project" value="UniProtKB-SubCell"/>
</dbReference>
<dbReference type="GO" id="GO:0033110">
    <property type="term" value="C:Cvt vesicle membrane"/>
    <property type="evidence" value="ECO:0007669"/>
    <property type="project" value="UniProtKB-SubCell"/>
</dbReference>
<dbReference type="GO" id="GO:0006914">
    <property type="term" value="P:autophagy"/>
    <property type="evidence" value="ECO:0007669"/>
    <property type="project" value="UniProtKB-KW"/>
</dbReference>
<dbReference type="CDD" id="cd16128">
    <property type="entry name" value="Ubl_ATG8"/>
    <property type="match status" value="1"/>
</dbReference>
<dbReference type="FunFam" id="3.10.20.90:FF:000010">
    <property type="entry name" value="Autophagy-related protein"/>
    <property type="match status" value="1"/>
</dbReference>
<dbReference type="Gene3D" id="3.10.20.90">
    <property type="entry name" value="Phosphatidylinositol 3-kinase Catalytic Subunit, Chain A, domain 1"/>
    <property type="match status" value="1"/>
</dbReference>
<dbReference type="InterPro" id="IPR004241">
    <property type="entry name" value="Atg8-like"/>
</dbReference>
<dbReference type="InterPro" id="IPR029071">
    <property type="entry name" value="Ubiquitin-like_domsf"/>
</dbReference>
<dbReference type="PANTHER" id="PTHR10969">
    <property type="entry name" value="MICROTUBULE-ASSOCIATED PROTEINS 1A/1B LIGHT CHAIN 3-RELATED"/>
    <property type="match status" value="1"/>
</dbReference>
<dbReference type="Pfam" id="PF02991">
    <property type="entry name" value="ATG8"/>
    <property type="match status" value="1"/>
</dbReference>
<dbReference type="SUPFAM" id="SSF54236">
    <property type="entry name" value="Ubiquitin-like"/>
    <property type="match status" value="1"/>
</dbReference>
<gene>
    <name evidence="3" type="primary">ATG8</name>
    <name type="ORF">BBA_02302</name>
</gene>
<name>ATG8_BEAB2</name>
<accession>J4UTT5</accession>
<comment type="function">
    <text evidence="1 2">Ubiquitin-like modifier involved in cytoplasm to vacuole transport (Cvt) vesicles and autophagosome formation (PubMed:27197558). With ATG4, mediates the delivery of the vesicles and autophagosomes to the vacuole via the microtubule cytoskeleton (By similarity). Required for selective autophagic degradation of the nucleus (nucleophagy) as well as for mitophagy which contributes to regulate mitochondrial quantity and quality by eliminating the mitochondria to a basal level to fulfill cellular energy requirements and preventing excess ROS production (By similarity). Also participates in membrane fusion events that take place in the early secretory pathway (By similarity). Also involved in endoplasmic reticulum-specific autophagic process and is essential for the survival of cells subjected to severe ER stress (By similarity). The ATG8-PE conjugate mediates tethering between adjacent membranes and stimulates membrane hemifusion, leading to expansion of the autophagosomal membrane during autophagy (By similarity). Moreover not only conjugation, but also subsequent ATG8-PE deconjugation is an important step required to facilitate multiple events during macroautophagy, and especially for efficient autophagosome biogenesis, the assembly of ATG9-containing tubulovesicular clusters into phagophores/autophagosomes, and for the disassembly of PAS-associated ATG components (By similarity). Contributes to conidiation by regulating the conidial levels of the conidiation-related protein CP15 and mediates fungal oxidation resistance by controlling total superoxide dismutase (SOD) activity (PubMed:27197558).</text>
</comment>
<comment type="subunit">
    <text evidence="1">Conjugation to phosphatidylethanolamine (PE) leads to homodimerization (By similarity). Interacts with ATG1, ATG3, ATG4, ATG7 and ATG12 (By similarity).</text>
</comment>
<comment type="subcellular location">
    <subcellularLocation>
        <location evidence="1">Cytoplasmic vesicle</location>
        <location evidence="1">Cvt vesicle membrane</location>
        <topology evidence="1">Lipid-anchor</topology>
    </subcellularLocation>
    <subcellularLocation>
        <location evidence="2">Cytoplasmic vesicle</location>
        <location evidence="2">Autophagosome membrane</location>
        <topology evidence="1">Lipid-anchor</topology>
    </subcellularLocation>
    <subcellularLocation>
        <location evidence="2">Vacuole membrane</location>
        <topology evidence="1">Lipid-anchor</topology>
    </subcellularLocation>
    <text evidence="1">Membrane-associated through a lipid anchor (By similarity). This association needs the 2 ubiquitin-like systems required for cytoplasm to vacuole transport and autophagy (By similarity). Localizes to both the isolation membrane (IM) and the vacuole-isolation membrane contact site (VICS) during IM expansion (By similarity). The IM is a membrane sac generated from the pre-autophagosomal structure that ultimately expands to become a mature autophagosome (By similarity).</text>
</comment>
<comment type="PTM">
    <text evidence="1">The C-terminal Ser-117 and Ile-118 residues of ATG8 are removed by ATG4 to expose Gly-116 at the C-terminus (By similarity). This Gly-116 forms then a thioester bond with ATG7 (E1-like activating enzyme) before being transferred to ATG3 (the specific E2 conjugating enzyme), in order to be finally amidated with phosphatidylethanolamine (By similarity). This lipid modification anchors ATG8 to membranes and can be reversed by ATG4, releasing soluble ATG8 (By similarity).</text>
</comment>
<comment type="disruption phenotype">
    <text evidence="2">Blocks autophagy (PubMed:27197558). Leads to reduced conidial germination under starvation (PubMed:27197558). Especially, leads to reduced CP15 levels in conidia (PubMed:27197558). Also exhibits enhanced sensitivity to oxidative stress (PubMed:27197558). Impairs growth of the mycelia on host cadavers and considerably weakens virulence (PubMed:27197558).</text>
</comment>
<comment type="similarity">
    <text evidence="4">Belongs to the ATG8 family.</text>
</comment>
<proteinExistence type="evidence at transcript level"/>
<protein>
    <recommendedName>
        <fullName evidence="3">Autophagy-related protein 8</fullName>
    </recommendedName>
    <alternativeName>
        <fullName evidence="1">Autophagy-related ubiquitin-like modifier ATG8</fullName>
    </alternativeName>
</protein>